<organism>
    <name type="scientific">Ralstonia nicotianae (strain ATCC BAA-1114 / GMI1000)</name>
    <name type="common">Ralstonia solanacearum</name>
    <dbReference type="NCBI Taxonomy" id="267608"/>
    <lineage>
        <taxon>Bacteria</taxon>
        <taxon>Pseudomonadati</taxon>
        <taxon>Pseudomonadota</taxon>
        <taxon>Betaproteobacteria</taxon>
        <taxon>Burkholderiales</taxon>
        <taxon>Burkholderiaceae</taxon>
        <taxon>Ralstonia</taxon>
        <taxon>Ralstonia solanacearum species complex</taxon>
    </lineage>
</organism>
<accession>Q8Y0B4</accession>
<proteinExistence type="inferred from homology"/>
<protein>
    <recommendedName>
        <fullName evidence="1">Cell division protein FtsB</fullName>
    </recommendedName>
</protein>
<sequence>MRLITLFLLLLLLAIQYPLWLGKGGWLRVWDMQKQVASQNQRNAELKQRNLKLEGEVKDLKEGTGAIEERARYELGMVKDDEGFVQFVAPAPKTSETPLPPPAALQPNHRH</sequence>
<dbReference type="EMBL" id="AL646052">
    <property type="protein sequence ID" value="CAD14832.1"/>
    <property type="molecule type" value="Genomic_DNA"/>
</dbReference>
<dbReference type="RefSeq" id="WP_011001080.1">
    <property type="nucleotide sequence ID" value="NC_003295.1"/>
</dbReference>
<dbReference type="SMR" id="Q8Y0B4"/>
<dbReference type="STRING" id="267608.RSc1130"/>
<dbReference type="EnsemblBacteria" id="CAD14832">
    <property type="protein sequence ID" value="CAD14832"/>
    <property type="gene ID" value="RSc1130"/>
</dbReference>
<dbReference type="KEGG" id="rso:RSc1130"/>
<dbReference type="eggNOG" id="COG2919">
    <property type="taxonomic scope" value="Bacteria"/>
</dbReference>
<dbReference type="HOGENOM" id="CLU_134863_5_0_4"/>
<dbReference type="Proteomes" id="UP000001436">
    <property type="component" value="Chromosome"/>
</dbReference>
<dbReference type="GO" id="GO:0032153">
    <property type="term" value="C:cell division site"/>
    <property type="evidence" value="ECO:0007669"/>
    <property type="project" value="UniProtKB-UniRule"/>
</dbReference>
<dbReference type="GO" id="GO:0030428">
    <property type="term" value="C:cell septum"/>
    <property type="evidence" value="ECO:0007669"/>
    <property type="project" value="TreeGrafter"/>
</dbReference>
<dbReference type="GO" id="GO:0005886">
    <property type="term" value="C:plasma membrane"/>
    <property type="evidence" value="ECO:0007669"/>
    <property type="project" value="UniProtKB-SubCell"/>
</dbReference>
<dbReference type="GO" id="GO:0043093">
    <property type="term" value="P:FtsZ-dependent cytokinesis"/>
    <property type="evidence" value="ECO:0007669"/>
    <property type="project" value="UniProtKB-UniRule"/>
</dbReference>
<dbReference type="HAMAP" id="MF_00599">
    <property type="entry name" value="FtsB"/>
    <property type="match status" value="1"/>
</dbReference>
<dbReference type="InterPro" id="IPR023081">
    <property type="entry name" value="Cell_div_FtsB"/>
</dbReference>
<dbReference type="InterPro" id="IPR007060">
    <property type="entry name" value="FtsL/DivIC"/>
</dbReference>
<dbReference type="NCBIfam" id="NF002058">
    <property type="entry name" value="PRK00888.1"/>
    <property type="match status" value="1"/>
</dbReference>
<dbReference type="PANTHER" id="PTHR37485">
    <property type="entry name" value="CELL DIVISION PROTEIN FTSB"/>
    <property type="match status" value="1"/>
</dbReference>
<dbReference type="PANTHER" id="PTHR37485:SF1">
    <property type="entry name" value="CELL DIVISION PROTEIN FTSB"/>
    <property type="match status" value="1"/>
</dbReference>
<dbReference type="Pfam" id="PF04977">
    <property type="entry name" value="DivIC"/>
    <property type="match status" value="1"/>
</dbReference>
<keyword id="KW-0131">Cell cycle</keyword>
<keyword id="KW-0132">Cell division</keyword>
<keyword id="KW-0997">Cell inner membrane</keyword>
<keyword id="KW-1003">Cell membrane</keyword>
<keyword id="KW-0175">Coiled coil</keyword>
<keyword id="KW-0472">Membrane</keyword>
<keyword id="KW-1185">Reference proteome</keyword>
<keyword id="KW-0812">Transmembrane</keyword>
<keyword id="KW-1133">Transmembrane helix</keyword>
<name>FTSB_RALN1</name>
<gene>
    <name evidence="1" type="primary">ftsB</name>
    <name type="ordered locus">RSc1130</name>
    <name type="ORF">RS04623</name>
</gene>
<evidence type="ECO:0000255" key="1">
    <source>
        <dbReference type="HAMAP-Rule" id="MF_00599"/>
    </source>
</evidence>
<evidence type="ECO:0000256" key="2">
    <source>
        <dbReference type="SAM" id="MobiDB-lite"/>
    </source>
</evidence>
<reference key="1">
    <citation type="journal article" date="2002" name="Nature">
        <title>Genome sequence of the plant pathogen Ralstonia solanacearum.</title>
        <authorList>
            <person name="Salanoubat M."/>
            <person name="Genin S."/>
            <person name="Artiguenave F."/>
            <person name="Gouzy J."/>
            <person name="Mangenot S."/>
            <person name="Arlat M."/>
            <person name="Billault A."/>
            <person name="Brottier P."/>
            <person name="Camus J.-C."/>
            <person name="Cattolico L."/>
            <person name="Chandler M."/>
            <person name="Choisne N."/>
            <person name="Claudel-Renard C."/>
            <person name="Cunnac S."/>
            <person name="Demange N."/>
            <person name="Gaspin C."/>
            <person name="Lavie M."/>
            <person name="Moisan A."/>
            <person name="Robert C."/>
            <person name="Saurin W."/>
            <person name="Schiex T."/>
            <person name="Siguier P."/>
            <person name="Thebault P."/>
            <person name="Whalen M."/>
            <person name="Wincker P."/>
            <person name="Levy M."/>
            <person name="Weissenbach J."/>
            <person name="Boucher C.A."/>
        </authorList>
    </citation>
    <scope>NUCLEOTIDE SEQUENCE [LARGE SCALE GENOMIC DNA]</scope>
    <source>
        <strain>ATCC BAA-1114 / GMI1000</strain>
    </source>
</reference>
<comment type="function">
    <text evidence="1">Essential cell division protein. May link together the upstream cell division proteins, which are predominantly cytoplasmic, with the downstream cell division proteins, which are predominantly periplasmic.</text>
</comment>
<comment type="subunit">
    <text evidence="1">Part of a complex composed of FtsB, FtsL and FtsQ.</text>
</comment>
<comment type="subcellular location">
    <subcellularLocation>
        <location evidence="1">Cell inner membrane</location>
        <topology evidence="1">Single-pass type II membrane protein</topology>
    </subcellularLocation>
    <text evidence="1">Localizes to the division septum.</text>
</comment>
<comment type="similarity">
    <text evidence="1">Belongs to the FtsB family.</text>
</comment>
<feature type="chain" id="PRO_0000214452" description="Cell division protein FtsB">
    <location>
        <begin position="1"/>
        <end position="111"/>
    </location>
</feature>
<feature type="topological domain" description="Cytoplasmic" evidence="1">
    <location>
        <begin position="1"/>
        <end position="3"/>
    </location>
</feature>
<feature type="transmembrane region" description="Helical" evidence="1">
    <location>
        <begin position="4"/>
        <end position="21"/>
    </location>
</feature>
<feature type="topological domain" description="Periplasmic" evidence="1">
    <location>
        <begin position="22"/>
        <end position="111"/>
    </location>
</feature>
<feature type="region of interest" description="Disordered" evidence="2">
    <location>
        <begin position="90"/>
        <end position="111"/>
    </location>
</feature>
<feature type="coiled-coil region" evidence="1">
    <location>
        <begin position="28"/>
        <end position="64"/>
    </location>
</feature>